<protein>
    <recommendedName>
        <fullName>Corticoliberin</fullName>
    </recommendedName>
    <alternativeName>
        <fullName>Corticotropin-releasing factor</fullName>
        <shortName>CRF</shortName>
    </alternativeName>
    <alternativeName>
        <fullName>Corticotropin-releasing hormone</fullName>
    </alternativeName>
</protein>
<comment type="function">
    <text evidence="1">This hormone from hypothalamus regulates the release of corticotropin from pituitary gland.</text>
</comment>
<comment type="subcellular location">
    <subcellularLocation>
        <location>Secreted</location>
    </subcellularLocation>
</comment>
<comment type="similarity">
    <text evidence="4">Belongs to the sauvagine/corticotropin-releasing factor/urotensin I family.</text>
</comment>
<proteinExistence type="inferred from homology"/>
<organism>
    <name type="scientific">Xenopus laevis</name>
    <name type="common">African clawed frog</name>
    <dbReference type="NCBI Taxonomy" id="8355"/>
    <lineage>
        <taxon>Eukaryota</taxon>
        <taxon>Metazoa</taxon>
        <taxon>Chordata</taxon>
        <taxon>Craniata</taxon>
        <taxon>Vertebrata</taxon>
        <taxon>Euteleostomi</taxon>
        <taxon>Amphibia</taxon>
        <taxon>Batrachia</taxon>
        <taxon>Anura</taxon>
        <taxon>Pipoidea</taxon>
        <taxon>Pipidae</taxon>
        <taxon>Xenopodinae</taxon>
        <taxon>Xenopus</taxon>
        <taxon>Xenopus</taxon>
    </lineage>
</organism>
<evidence type="ECO:0000250" key="1"/>
<evidence type="ECO:0000255" key="2"/>
<evidence type="ECO:0000256" key="3">
    <source>
        <dbReference type="SAM" id="MobiDB-lite"/>
    </source>
</evidence>
<evidence type="ECO:0000305" key="4"/>
<accession>P49188</accession>
<accession>Q0GGT6</accession>
<keyword id="KW-0027">Amidation</keyword>
<keyword id="KW-0165">Cleavage on pair of basic residues</keyword>
<keyword id="KW-0372">Hormone</keyword>
<keyword id="KW-1185">Reference proteome</keyword>
<keyword id="KW-0964">Secreted</keyword>
<keyword id="KW-0732">Signal</keyword>
<reference key="1">
    <citation type="journal article" date="1992" name="Mol. Endocrinol.">
        <title>Characterization of the genomic corticotropin-releasing factor (CRF) gene from Xenopus laevis: two members of the CRF family exist in amphibians.</title>
        <authorList>
            <person name="Stenzel-Poore M.P."/>
            <person name="Heldwein K.A."/>
            <person name="Stenzel P."/>
            <person name="Lee S."/>
            <person name="Vale W.W."/>
        </authorList>
    </citation>
    <scope>NUCLEOTIDE SEQUENCE [GENOMIC DNA]</scope>
</reference>
<reference key="2">
    <citation type="submission" date="2006-07" db="EMBL/GenBank/DDBJ databases">
        <title>Structural and functional analysis of corticotropin-releasing factor genes of the South African clawed frog, Xenopus laevis.</title>
        <authorList>
            <person name="Yao M."/>
            <person name="Stenzel-Poore M.P."/>
            <person name="Denver R.J."/>
        </authorList>
    </citation>
    <scope>NUCLEOTIDE SEQUENCE [GENOMIC DNA]</scope>
</reference>
<feature type="signal peptide" evidence="2">
    <location>
        <begin position="1"/>
        <end position="24"/>
    </location>
</feature>
<feature type="propeptide" id="PRO_0000006222" evidence="1">
    <location>
        <begin position="25"/>
        <end position="119"/>
    </location>
</feature>
<feature type="peptide" id="PRO_0000006223" description="Corticoliberin">
    <location>
        <begin position="120"/>
        <end position="160"/>
    </location>
</feature>
<feature type="region of interest" description="Disordered" evidence="3">
    <location>
        <begin position="91"/>
        <end position="122"/>
    </location>
</feature>
<feature type="compositionally biased region" description="Basic and acidic residues" evidence="3">
    <location>
        <begin position="113"/>
        <end position="122"/>
    </location>
</feature>
<feature type="modified residue" description="Isoleucine amide" evidence="1">
    <location>
        <position position="160"/>
    </location>
</feature>
<gene>
    <name type="primary">crh</name>
</gene>
<sequence length="162" mass="17880">MKFQLWVSTGILLVSLLPCHECRAFIKSPASSPGALLPALSNSQPFLLRMGEEYFLRLGNLHKHSPGSFPEASAGNFVRAVQQLQAQQWSSQPGMRAASLDGADSPYSAQEDPTEKAKRAEEPPISLDLTFHLLREVLEMARAEQIAQQAHSNRKLMDIIGK</sequence>
<name>CRF_XENLA</name>
<dbReference type="EMBL" id="S50096">
    <property type="protein sequence ID" value="AAB24277.1"/>
    <property type="molecule type" value="Genomic_DNA"/>
</dbReference>
<dbReference type="EMBL" id="DQ865136">
    <property type="protein sequence ID" value="ABI24191.1"/>
    <property type="molecule type" value="Genomic_DNA"/>
</dbReference>
<dbReference type="PIR" id="A45362">
    <property type="entry name" value="A45362"/>
</dbReference>
<dbReference type="RefSeq" id="NP_001165681.1">
    <property type="nucleotide sequence ID" value="NM_001172210.1"/>
</dbReference>
<dbReference type="GeneID" id="100337609"/>
<dbReference type="KEGG" id="xla:100337609"/>
<dbReference type="AGR" id="Xenbase:XB-GENE-6464312"/>
<dbReference type="CTD" id="100337609"/>
<dbReference type="Xenbase" id="XB-GENE-6464312">
    <property type="gene designation" value="crh.L"/>
</dbReference>
<dbReference type="OrthoDB" id="9837731at2759"/>
<dbReference type="Proteomes" id="UP000186698">
    <property type="component" value="Chromosome 6L"/>
</dbReference>
<dbReference type="Bgee" id="100337609">
    <property type="expression patterns" value="Expressed in internal ear and 1 other cell type or tissue"/>
</dbReference>
<dbReference type="GO" id="GO:0005737">
    <property type="term" value="C:cytoplasm"/>
    <property type="evidence" value="ECO:0000314"/>
    <property type="project" value="AgBase"/>
</dbReference>
<dbReference type="GO" id="GO:0005615">
    <property type="term" value="C:extracellular space"/>
    <property type="evidence" value="ECO:0000318"/>
    <property type="project" value="GO_Central"/>
</dbReference>
<dbReference type="GO" id="GO:0017045">
    <property type="term" value="F:corticotropin-releasing hormone activity"/>
    <property type="evidence" value="ECO:0000318"/>
    <property type="project" value="GO_Central"/>
</dbReference>
<dbReference type="GO" id="GO:0032811">
    <property type="term" value="P:negative regulation of epinephrine secretion"/>
    <property type="evidence" value="ECO:0000318"/>
    <property type="project" value="GO_Central"/>
</dbReference>
<dbReference type="GO" id="GO:0070093">
    <property type="term" value="P:negative regulation of glucagon secretion"/>
    <property type="evidence" value="ECO:0000318"/>
    <property type="project" value="GO_Central"/>
</dbReference>
<dbReference type="GO" id="GO:0051464">
    <property type="term" value="P:positive regulation of cortisol secretion"/>
    <property type="evidence" value="ECO:0000318"/>
    <property type="project" value="GO_Central"/>
</dbReference>
<dbReference type="Gene3D" id="6.10.250.1920">
    <property type="match status" value="1"/>
</dbReference>
<dbReference type="InterPro" id="IPR018446">
    <property type="entry name" value="Corticotropin-releasing_fac_CS"/>
</dbReference>
<dbReference type="InterPro" id="IPR000187">
    <property type="entry name" value="CRF"/>
</dbReference>
<dbReference type="InterPro" id="IPR003620">
    <property type="entry name" value="Urocortin_CRF"/>
</dbReference>
<dbReference type="PANTHER" id="PTHR15035:SF9">
    <property type="entry name" value="CORTICOLIBERIN"/>
    <property type="match status" value="1"/>
</dbReference>
<dbReference type="PANTHER" id="PTHR15035">
    <property type="entry name" value="CORTICOLIBERIN/UROCORTIN"/>
    <property type="match status" value="1"/>
</dbReference>
<dbReference type="Pfam" id="PF00473">
    <property type="entry name" value="CRF"/>
    <property type="match status" value="1"/>
</dbReference>
<dbReference type="PRINTS" id="PR01612">
    <property type="entry name" value="CRFFAMILY"/>
</dbReference>
<dbReference type="SMART" id="SM00039">
    <property type="entry name" value="CRF"/>
    <property type="match status" value="1"/>
</dbReference>
<dbReference type="PROSITE" id="PS00511">
    <property type="entry name" value="CRF"/>
    <property type="match status" value="1"/>
</dbReference>